<gene>
    <name type="primary">PON2</name>
</gene>
<sequence length="354" mass="39639">MGRLLGVGLLGDRWRSWGERLLALRNRLKASREVESVDLPNCHLIKGIEAGADDIDILPNGLAFFSVGLKCPGLHSFSPDKPGGILMMDLKKENPRALELRISRGFNLASFNPHGISTFIDSDDTVYLFVVNHPEFKNTVEIFKFEEEENSLLHLKTIKHELLPSVNDIIAVGPAHFYATNDHYFSDPFLKYLETYLNLHWANVVYYSPDEVKVVAEGFDAANGINISPDKKYIYVADILAHEIHVLEKHPNMNLTQLKVLKLDTLVDNLSIDPSSGDILVGCHPNGQKLFIYDPNNPPSSEVLRIQNILCEKPTVTTVYANNGSVLQGSSVASVYDRKLLIGTLYHRALYCEL</sequence>
<feature type="chain" id="PRO_0000223286" description="Serum paraoxonase/arylesterase 2">
    <location>
        <begin position="1"/>
        <end position="354"/>
    </location>
</feature>
<feature type="signal peptide" description="Not cleaved" evidence="2">
    <location>
        <begin position="1"/>
        <end status="unknown"/>
    </location>
</feature>
<feature type="active site" description="Proton acceptor" evidence="1">
    <location>
        <position position="114"/>
    </location>
</feature>
<feature type="binding site" evidence="1">
    <location>
        <position position="53"/>
    </location>
    <ligand>
        <name>Ca(2+)</name>
        <dbReference type="ChEBI" id="CHEBI:29108"/>
        <label>1</label>
        <note>catalytic</note>
    </ligand>
</feature>
<feature type="binding site" evidence="1">
    <location>
        <position position="54"/>
    </location>
    <ligand>
        <name>Ca(2+)</name>
        <dbReference type="ChEBI" id="CHEBI:29108"/>
        <label>2</label>
    </ligand>
</feature>
<feature type="binding site" evidence="1">
    <location>
        <position position="116"/>
    </location>
    <ligand>
        <name>Ca(2+)</name>
        <dbReference type="ChEBI" id="CHEBI:29108"/>
        <label>2</label>
    </ligand>
</feature>
<feature type="binding site" evidence="1">
    <location>
        <position position="167"/>
    </location>
    <ligand>
        <name>Ca(2+)</name>
        <dbReference type="ChEBI" id="CHEBI:29108"/>
        <label>1</label>
        <note>catalytic</note>
    </ligand>
</feature>
<feature type="binding site" evidence="1">
    <location>
        <position position="168"/>
    </location>
    <ligand>
        <name>Ca(2+)</name>
        <dbReference type="ChEBI" id="CHEBI:29108"/>
        <label>2</label>
    </ligand>
</feature>
<feature type="binding site" evidence="1">
    <location>
        <position position="223"/>
    </location>
    <ligand>
        <name>Ca(2+)</name>
        <dbReference type="ChEBI" id="CHEBI:29108"/>
        <label>1</label>
        <note>catalytic</note>
    </ligand>
</feature>
<feature type="binding site" evidence="1">
    <location>
        <position position="268"/>
    </location>
    <ligand>
        <name>Ca(2+)</name>
        <dbReference type="ChEBI" id="CHEBI:29108"/>
        <label>1</label>
        <note>catalytic</note>
    </ligand>
</feature>
<feature type="binding site" evidence="1">
    <location>
        <position position="269"/>
    </location>
    <ligand>
        <name>Ca(2+)</name>
        <dbReference type="ChEBI" id="CHEBI:29108"/>
        <label>1</label>
        <note>catalytic</note>
    </ligand>
</feature>
<feature type="glycosylation site" description="N-linked (GlcNAc...) asparagine" evidence="2">
    <location>
        <position position="254"/>
    </location>
</feature>
<feature type="glycosylation site" description="N-linked (GlcNAc...) asparagine" evidence="2">
    <location>
        <position position="269"/>
    </location>
</feature>
<feature type="glycosylation site" description="N-linked (GlcNAc...) asparagine" evidence="2">
    <location>
        <position position="323"/>
    </location>
</feature>
<feature type="disulfide bond" evidence="1">
    <location>
        <begin position="42"/>
        <end position="352"/>
    </location>
</feature>
<name>PON2_CANLF</name>
<protein>
    <recommendedName>
        <fullName>Serum paraoxonase/arylesterase 2</fullName>
        <shortName>PON 2</shortName>
        <ecNumber>3.1.1.2</ecNumber>
        <ecNumber>3.1.1.81</ecNumber>
    </recommendedName>
    <alternativeName>
        <fullName>Aromatic esterase 2</fullName>
        <shortName>A-esterase 2</shortName>
    </alternativeName>
    <alternativeName>
        <fullName>Serum aryldialkylphosphatase 2</fullName>
    </alternativeName>
</protein>
<keyword id="KW-0106">Calcium</keyword>
<keyword id="KW-1015">Disulfide bond</keyword>
<keyword id="KW-0325">Glycoprotein</keyword>
<keyword id="KW-0378">Hydrolase</keyword>
<keyword id="KW-0472">Membrane</keyword>
<keyword id="KW-0479">Metal-binding</keyword>
<keyword id="KW-1185">Reference proteome</keyword>
<keyword id="KW-0732">Signal</keyword>
<reference key="1">
    <citation type="journal article" date="1996" name="Genomics">
        <title>The human serum paraoxonase/arylesterase gene (PON1) is one member of a multigene family.</title>
        <authorList>
            <person name="Primo-Parmo S.L."/>
            <person name="Sorenson R.C."/>
            <person name="Teiber J."/>
            <person name="La Du B.N."/>
        </authorList>
    </citation>
    <scope>NUCLEOTIDE SEQUENCE [MRNA]</scope>
    <source>
        <strain>Mongrel</strain>
        <tissue>Liver</tissue>
    </source>
</reference>
<dbReference type="EC" id="3.1.1.2"/>
<dbReference type="EC" id="3.1.1.81"/>
<dbReference type="EMBL" id="L48515">
    <property type="protein sequence ID" value="AAC41635.1"/>
    <property type="molecule type" value="mRNA"/>
</dbReference>
<dbReference type="SMR" id="P54832"/>
<dbReference type="FunCoup" id="P54832">
    <property type="interactions" value="17"/>
</dbReference>
<dbReference type="STRING" id="9615.ENSCAFP00000062002"/>
<dbReference type="GlyCosmos" id="P54832">
    <property type="glycosylation" value="3 sites, No reported glycans"/>
</dbReference>
<dbReference type="PaxDb" id="9612-ENSCAFP00000003109"/>
<dbReference type="eggNOG" id="ENOG502QUCT">
    <property type="taxonomic scope" value="Eukaryota"/>
</dbReference>
<dbReference type="InParanoid" id="P54832"/>
<dbReference type="OrthoDB" id="423498at2759"/>
<dbReference type="Proteomes" id="UP000002254">
    <property type="component" value="Unplaced"/>
</dbReference>
<dbReference type="Proteomes" id="UP000694429">
    <property type="component" value="Unplaced"/>
</dbReference>
<dbReference type="Proteomes" id="UP000694542">
    <property type="component" value="Unplaced"/>
</dbReference>
<dbReference type="Proteomes" id="UP000805418">
    <property type="component" value="Unplaced"/>
</dbReference>
<dbReference type="GO" id="GO:0005576">
    <property type="term" value="C:extracellular region"/>
    <property type="evidence" value="ECO:0007669"/>
    <property type="project" value="InterPro"/>
</dbReference>
<dbReference type="GO" id="GO:0016020">
    <property type="term" value="C:membrane"/>
    <property type="evidence" value="ECO:0007669"/>
    <property type="project" value="UniProtKB-SubCell"/>
</dbReference>
<dbReference type="GO" id="GO:0102007">
    <property type="term" value="F:acyl-L-homoserine-lactone lactonohydrolase activity"/>
    <property type="evidence" value="ECO:0007669"/>
    <property type="project" value="UniProtKB-EC"/>
</dbReference>
<dbReference type="GO" id="GO:0004064">
    <property type="term" value="F:arylesterase activity"/>
    <property type="evidence" value="ECO:0000318"/>
    <property type="project" value="GO_Central"/>
</dbReference>
<dbReference type="GO" id="GO:0046872">
    <property type="term" value="F:metal ion binding"/>
    <property type="evidence" value="ECO:0007669"/>
    <property type="project" value="UniProtKB-KW"/>
</dbReference>
<dbReference type="GO" id="GO:0009636">
    <property type="term" value="P:response to toxic substance"/>
    <property type="evidence" value="ECO:0000318"/>
    <property type="project" value="GO_Central"/>
</dbReference>
<dbReference type="FunFam" id="2.120.10.30:FF:000023">
    <property type="entry name" value="Serum paraoxonase/arylesterase 2"/>
    <property type="match status" value="1"/>
</dbReference>
<dbReference type="Gene3D" id="2.120.10.30">
    <property type="entry name" value="TolB, C-terminal domain"/>
    <property type="match status" value="1"/>
</dbReference>
<dbReference type="InterPro" id="IPR011042">
    <property type="entry name" value="6-blade_b-propeller_TolB-like"/>
</dbReference>
<dbReference type="InterPro" id="IPR002640">
    <property type="entry name" value="Arylesterase"/>
</dbReference>
<dbReference type="InterPro" id="IPR008364">
    <property type="entry name" value="Paraoxonase2"/>
</dbReference>
<dbReference type="InterPro" id="IPR051288">
    <property type="entry name" value="Serum_paraoxonase/arylesterase"/>
</dbReference>
<dbReference type="PANTHER" id="PTHR11799">
    <property type="entry name" value="PARAOXONASE"/>
    <property type="match status" value="1"/>
</dbReference>
<dbReference type="PANTHER" id="PTHR11799:SF17">
    <property type="entry name" value="SERUM PARAOXONASE_ARYLESTERASE 2"/>
    <property type="match status" value="1"/>
</dbReference>
<dbReference type="Pfam" id="PF01731">
    <property type="entry name" value="Arylesterase"/>
    <property type="match status" value="1"/>
</dbReference>
<dbReference type="PRINTS" id="PR01785">
    <property type="entry name" value="PARAOXONASE"/>
</dbReference>
<dbReference type="PRINTS" id="PR01787">
    <property type="entry name" value="PARAOXONASE2"/>
</dbReference>
<dbReference type="SUPFAM" id="SSF63829">
    <property type="entry name" value="Calcium-dependent phosphotriesterase"/>
    <property type="match status" value="1"/>
</dbReference>
<evidence type="ECO:0000250" key="1"/>
<evidence type="ECO:0000255" key="2"/>
<evidence type="ECO:0000305" key="3"/>
<comment type="function">
    <text evidence="1">Capable of hydrolyzing lactones and a number of aromatic carboxylic acid esters.</text>
</comment>
<comment type="catalytic activity">
    <reaction>
        <text>a phenyl acetate + H2O = a phenol + acetate + H(+)</text>
        <dbReference type="Rhea" id="RHEA:17309"/>
        <dbReference type="ChEBI" id="CHEBI:15377"/>
        <dbReference type="ChEBI" id="CHEBI:15378"/>
        <dbReference type="ChEBI" id="CHEBI:30089"/>
        <dbReference type="ChEBI" id="CHEBI:33853"/>
        <dbReference type="ChEBI" id="CHEBI:140310"/>
        <dbReference type="EC" id="3.1.1.2"/>
    </reaction>
</comment>
<comment type="catalytic activity">
    <reaction>
        <text>an N-acyl-L-homoserine lactone + H2O = an N-acyl-L-homoserine + H(+)</text>
        <dbReference type="Rhea" id="RHEA:22576"/>
        <dbReference type="ChEBI" id="CHEBI:15377"/>
        <dbReference type="ChEBI" id="CHEBI:15378"/>
        <dbReference type="ChEBI" id="CHEBI:55474"/>
        <dbReference type="ChEBI" id="CHEBI:58921"/>
        <dbReference type="EC" id="3.1.1.81"/>
    </reaction>
</comment>
<comment type="cofactor">
    <cofactor evidence="1">
        <name>Ca(2+)</name>
        <dbReference type="ChEBI" id="CHEBI:29108"/>
    </cofactor>
    <text evidence="1">Binds 2 calcium ions per subunit.</text>
</comment>
<comment type="subunit">
    <text evidence="1">Homotrimer.</text>
</comment>
<comment type="subcellular location">
    <subcellularLocation>
        <location evidence="1">Membrane</location>
        <topology evidence="1">Peripheral membrane protein</topology>
    </subcellularLocation>
</comment>
<comment type="PTM">
    <text evidence="1">Glycosylated.</text>
</comment>
<comment type="PTM">
    <text evidence="1">The signal sequence is not cleaved.</text>
</comment>
<comment type="similarity">
    <text evidence="3">Belongs to the paraoxonase family.</text>
</comment>
<proteinExistence type="evidence at transcript level"/>
<organism>
    <name type="scientific">Canis lupus familiaris</name>
    <name type="common">Dog</name>
    <name type="synonym">Canis familiaris</name>
    <dbReference type="NCBI Taxonomy" id="9615"/>
    <lineage>
        <taxon>Eukaryota</taxon>
        <taxon>Metazoa</taxon>
        <taxon>Chordata</taxon>
        <taxon>Craniata</taxon>
        <taxon>Vertebrata</taxon>
        <taxon>Euteleostomi</taxon>
        <taxon>Mammalia</taxon>
        <taxon>Eutheria</taxon>
        <taxon>Laurasiatheria</taxon>
        <taxon>Carnivora</taxon>
        <taxon>Caniformia</taxon>
        <taxon>Canidae</taxon>
        <taxon>Canis</taxon>
    </lineage>
</organism>
<accession>P54832</accession>